<dbReference type="EC" id="6.3.4.4" evidence="1"/>
<dbReference type="EMBL" id="CP000031">
    <property type="protein sequence ID" value="AAV94607.1"/>
    <property type="molecule type" value="Genomic_DNA"/>
</dbReference>
<dbReference type="RefSeq" id="WP_011047057.1">
    <property type="nucleotide sequence ID" value="NC_003911.12"/>
</dbReference>
<dbReference type="SMR" id="Q5LTU4"/>
<dbReference type="STRING" id="246200.SPO1318"/>
<dbReference type="PaxDb" id="246200-SPO1318"/>
<dbReference type="KEGG" id="sil:SPO1318"/>
<dbReference type="eggNOG" id="COG0104">
    <property type="taxonomic scope" value="Bacteria"/>
</dbReference>
<dbReference type="HOGENOM" id="CLU_029848_0_0_5"/>
<dbReference type="OrthoDB" id="9807553at2"/>
<dbReference type="UniPathway" id="UPA00075">
    <property type="reaction ID" value="UER00335"/>
</dbReference>
<dbReference type="Proteomes" id="UP000001023">
    <property type="component" value="Chromosome"/>
</dbReference>
<dbReference type="GO" id="GO:0005737">
    <property type="term" value="C:cytoplasm"/>
    <property type="evidence" value="ECO:0007669"/>
    <property type="project" value="UniProtKB-SubCell"/>
</dbReference>
<dbReference type="GO" id="GO:0004019">
    <property type="term" value="F:adenylosuccinate synthase activity"/>
    <property type="evidence" value="ECO:0007669"/>
    <property type="project" value="UniProtKB-UniRule"/>
</dbReference>
<dbReference type="GO" id="GO:0005525">
    <property type="term" value="F:GTP binding"/>
    <property type="evidence" value="ECO:0007669"/>
    <property type="project" value="UniProtKB-UniRule"/>
</dbReference>
<dbReference type="GO" id="GO:0000287">
    <property type="term" value="F:magnesium ion binding"/>
    <property type="evidence" value="ECO:0007669"/>
    <property type="project" value="UniProtKB-UniRule"/>
</dbReference>
<dbReference type="GO" id="GO:0044208">
    <property type="term" value="P:'de novo' AMP biosynthetic process"/>
    <property type="evidence" value="ECO:0007669"/>
    <property type="project" value="UniProtKB-UniRule"/>
</dbReference>
<dbReference type="GO" id="GO:0046040">
    <property type="term" value="P:IMP metabolic process"/>
    <property type="evidence" value="ECO:0007669"/>
    <property type="project" value="TreeGrafter"/>
</dbReference>
<dbReference type="CDD" id="cd03108">
    <property type="entry name" value="AdSS"/>
    <property type="match status" value="1"/>
</dbReference>
<dbReference type="FunFam" id="1.10.300.10:FF:000001">
    <property type="entry name" value="Adenylosuccinate synthetase"/>
    <property type="match status" value="1"/>
</dbReference>
<dbReference type="FunFam" id="3.90.170.10:FF:000001">
    <property type="entry name" value="Adenylosuccinate synthetase"/>
    <property type="match status" value="1"/>
</dbReference>
<dbReference type="Gene3D" id="3.40.440.10">
    <property type="entry name" value="Adenylosuccinate Synthetase, subunit A, domain 1"/>
    <property type="match status" value="1"/>
</dbReference>
<dbReference type="Gene3D" id="1.10.300.10">
    <property type="entry name" value="Adenylosuccinate Synthetase, subunit A, domain 2"/>
    <property type="match status" value="1"/>
</dbReference>
<dbReference type="Gene3D" id="3.90.170.10">
    <property type="entry name" value="Adenylosuccinate Synthetase, subunit A, domain 3"/>
    <property type="match status" value="1"/>
</dbReference>
<dbReference type="HAMAP" id="MF_00011">
    <property type="entry name" value="Adenylosucc_synth"/>
    <property type="match status" value="1"/>
</dbReference>
<dbReference type="InterPro" id="IPR018220">
    <property type="entry name" value="Adenylosuccin_syn_GTP-bd"/>
</dbReference>
<dbReference type="InterPro" id="IPR033128">
    <property type="entry name" value="Adenylosuccin_syn_Lys_AS"/>
</dbReference>
<dbReference type="InterPro" id="IPR042109">
    <property type="entry name" value="Adenylosuccinate_synth_dom1"/>
</dbReference>
<dbReference type="InterPro" id="IPR042110">
    <property type="entry name" value="Adenylosuccinate_synth_dom2"/>
</dbReference>
<dbReference type="InterPro" id="IPR042111">
    <property type="entry name" value="Adenylosuccinate_synth_dom3"/>
</dbReference>
<dbReference type="InterPro" id="IPR001114">
    <property type="entry name" value="Adenylosuccinate_synthetase"/>
</dbReference>
<dbReference type="InterPro" id="IPR027417">
    <property type="entry name" value="P-loop_NTPase"/>
</dbReference>
<dbReference type="NCBIfam" id="NF002223">
    <property type="entry name" value="PRK01117.1"/>
    <property type="match status" value="1"/>
</dbReference>
<dbReference type="NCBIfam" id="TIGR00184">
    <property type="entry name" value="purA"/>
    <property type="match status" value="1"/>
</dbReference>
<dbReference type="PANTHER" id="PTHR11846">
    <property type="entry name" value="ADENYLOSUCCINATE SYNTHETASE"/>
    <property type="match status" value="1"/>
</dbReference>
<dbReference type="PANTHER" id="PTHR11846:SF0">
    <property type="entry name" value="ADENYLOSUCCINATE SYNTHETASE"/>
    <property type="match status" value="1"/>
</dbReference>
<dbReference type="Pfam" id="PF00709">
    <property type="entry name" value="Adenylsucc_synt"/>
    <property type="match status" value="1"/>
</dbReference>
<dbReference type="SMART" id="SM00788">
    <property type="entry name" value="Adenylsucc_synt"/>
    <property type="match status" value="1"/>
</dbReference>
<dbReference type="SUPFAM" id="SSF52540">
    <property type="entry name" value="P-loop containing nucleoside triphosphate hydrolases"/>
    <property type="match status" value="1"/>
</dbReference>
<dbReference type="PROSITE" id="PS01266">
    <property type="entry name" value="ADENYLOSUCCIN_SYN_1"/>
    <property type="match status" value="1"/>
</dbReference>
<dbReference type="PROSITE" id="PS00513">
    <property type="entry name" value="ADENYLOSUCCIN_SYN_2"/>
    <property type="match status" value="1"/>
</dbReference>
<keyword id="KW-0963">Cytoplasm</keyword>
<keyword id="KW-0342">GTP-binding</keyword>
<keyword id="KW-0436">Ligase</keyword>
<keyword id="KW-0460">Magnesium</keyword>
<keyword id="KW-0479">Metal-binding</keyword>
<keyword id="KW-0547">Nucleotide-binding</keyword>
<keyword id="KW-0658">Purine biosynthesis</keyword>
<keyword id="KW-1185">Reference proteome</keyword>
<reference key="1">
    <citation type="journal article" date="2004" name="Nature">
        <title>Genome sequence of Silicibacter pomeroyi reveals adaptations to the marine environment.</title>
        <authorList>
            <person name="Moran M.A."/>
            <person name="Buchan A."/>
            <person name="Gonzalez J.M."/>
            <person name="Heidelberg J.F."/>
            <person name="Whitman W.B."/>
            <person name="Kiene R.P."/>
            <person name="Henriksen J.R."/>
            <person name="King G.M."/>
            <person name="Belas R."/>
            <person name="Fuqua C."/>
            <person name="Brinkac L.M."/>
            <person name="Lewis M."/>
            <person name="Johri S."/>
            <person name="Weaver B."/>
            <person name="Pai G."/>
            <person name="Eisen J.A."/>
            <person name="Rahe E."/>
            <person name="Sheldon W.M."/>
            <person name="Ye W."/>
            <person name="Miller T.R."/>
            <person name="Carlton J."/>
            <person name="Rasko D.A."/>
            <person name="Paulsen I.T."/>
            <person name="Ren Q."/>
            <person name="Daugherty S.C."/>
            <person name="DeBoy R.T."/>
            <person name="Dodson R.J."/>
            <person name="Durkin A.S."/>
            <person name="Madupu R."/>
            <person name="Nelson W.C."/>
            <person name="Sullivan S.A."/>
            <person name="Rosovitz M.J."/>
            <person name="Haft D.H."/>
            <person name="Selengut J."/>
            <person name="Ward N."/>
        </authorList>
    </citation>
    <scope>NUCLEOTIDE SEQUENCE [LARGE SCALE GENOMIC DNA]</scope>
    <source>
        <strain>ATCC 700808 / DSM 15171 / DSS-3</strain>
    </source>
</reference>
<reference key="2">
    <citation type="journal article" date="2014" name="Stand. Genomic Sci.">
        <title>An updated genome annotation for the model marine bacterium Ruegeria pomeroyi DSS-3.</title>
        <authorList>
            <person name="Rivers A.R."/>
            <person name="Smith C.B."/>
            <person name="Moran M.A."/>
        </authorList>
    </citation>
    <scope>GENOME REANNOTATION</scope>
    <source>
        <strain>ATCC 700808 / DSM 15171 / DSS-3</strain>
    </source>
</reference>
<feature type="chain" id="PRO_0000224321" description="Adenylosuccinate synthetase">
    <location>
        <begin position="1"/>
        <end position="430"/>
    </location>
</feature>
<feature type="active site" description="Proton acceptor" evidence="1">
    <location>
        <position position="13"/>
    </location>
</feature>
<feature type="active site" description="Proton donor" evidence="1">
    <location>
        <position position="41"/>
    </location>
</feature>
<feature type="binding site" evidence="1">
    <location>
        <begin position="12"/>
        <end position="18"/>
    </location>
    <ligand>
        <name>GTP</name>
        <dbReference type="ChEBI" id="CHEBI:37565"/>
    </ligand>
</feature>
<feature type="binding site" description="in other chain" evidence="1">
    <location>
        <begin position="13"/>
        <end position="16"/>
    </location>
    <ligand>
        <name>IMP</name>
        <dbReference type="ChEBI" id="CHEBI:58053"/>
        <note>ligand shared between dimeric partners</note>
    </ligand>
</feature>
<feature type="binding site" evidence="1">
    <location>
        <position position="13"/>
    </location>
    <ligand>
        <name>Mg(2+)</name>
        <dbReference type="ChEBI" id="CHEBI:18420"/>
    </ligand>
</feature>
<feature type="binding site" description="in other chain" evidence="1">
    <location>
        <begin position="38"/>
        <end position="41"/>
    </location>
    <ligand>
        <name>IMP</name>
        <dbReference type="ChEBI" id="CHEBI:58053"/>
        <note>ligand shared between dimeric partners</note>
    </ligand>
</feature>
<feature type="binding site" evidence="1">
    <location>
        <begin position="40"/>
        <end position="42"/>
    </location>
    <ligand>
        <name>GTP</name>
        <dbReference type="ChEBI" id="CHEBI:37565"/>
    </ligand>
</feature>
<feature type="binding site" evidence="1">
    <location>
        <position position="40"/>
    </location>
    <ligand>
        <name>Mg(2+)</name>
        <dbReference type="ChEBI" id="CHEBI:18420"/>
    </ligand>
</feature>
<feature type="binding site" description="in other chain" evidence="1">
    <location>
        <position position="130"/>
    </location>
    <ligand>
        <name>IMP</name>
        <dbReference type="ChEBI" id="CHEBI:58053"/>
        <note>ligand shared between dimeric partners</note>
    </ligand>
</feature>
<feature type="binding site" evidence="1">
    <location>
        <position position="144"/>
    </location>
    <ligand>
        <name>IMP</name>
        <dbReference type="ChEBI" id="CHEBI:58053"/>
        <note>ligand shared between dimeric partners</note>
    </ligand>
</feature>
<feature type="binding site" description="in other chain" evidence="1">
    <location>
        <position position="224"/>
    </location>
    <ligand>
        <name>IMP</name>
        <dbReference type="ChEBI" id="CHEBI:58053"/>
        <note>ligand shared between dimeric partners</note>
    </ligand>
</feature>
<feature type="binding site" description="in other chain" evidence="1">
    <location>
        <position position="239"/>
    </location>
    <ligand>
        <name>IMP</name>
        <dbReference type="ChEBI" id="CHEBI:58053"/>
        <note>ligand shared between dimeric partners</note>
    </ligand>
</feature>
<feature type="binding site" evidence="1">
    <location>
        <begin position="299"/>
        <end position="305"/>
    </location>
    <ligand>
        <name>substrate</name>
    </ligand>
</feature>
<feature type="binding site" description="in other chain" evidence="1">
    <location>
        <position position="303"/>
    </location>
    <ligand>
        <name>IMP</name>
        <dbReference type="ChEBI" id="CHEBI:58053"/>
        <note>ligand shared between dimeric partners</note>
    </ligand>
</feature>
<feature type="binding site" evidence="1">
    <location>
        <position position="305"/>
    </location>
    <ligand>
        <name>GTP</name>
        <dbReference type="ChEBI" id="CHEBI:37565"/>
    </ligand>
</feature>
<feature type="binding site" evidence="1">
    <location>
        <begin position="331"/>
        <end position="333"/>
    </location>
    <ligand>
        <name>GTP</name>
        <dbReference type="ChEBI" id="CHEBI:37565"/>
    </ligand>
</feature>
<feature type="binding site" evidence="1">
    <location>
        <begin position="413"/>
        <end position="415"/>
    </location>
    <ligand>
        <name>GTP</name>
        <dbReference type="ChEBI" id="CHEBI:37565"/>
    </ligand>
</feature>
<sequence length="430" mass="46393">MANVVVVGAQWGDEGKGKIVDWLSERADVIARFQGGHNAGHTLVIDGEVYKLHALPSGVVRGGKLSVIGNGVVLDPWHLVKEIATIRDQGVEITPETLMIAENTPLILPFHGELDRARENQNSVAKIGTTGRGIGPAYEDKVGRRVIRVADLADAATLELRVDRALVHHNALRSGLGLDPIDRDALLVSLREIAPQILPFAAPVWKVLNEKRKAGKRILFEGAQGALLDIDFGTYPFVTSSNVIAGQAATGVGIGPGAIDYVLGIVKAYTTRVGEGPFPTELDDADGERLGTRGHEFGTTTGRKRRCGWFDAALLRQTCATSGINGIALTKLDVLDGFETLKICVGYDLDGTRLDYLPTAADQQARCTPIYEEMPGWSESTEGARSWADLPANAIKYVRRVEELIDCPVAMVSTSPEREDTILVTDPFAD</sequence>
<evidence type="ECO:0000255" key="1">
    <source>
        <dbReference type="HAMAP-Rule" id="MF_00011"/>
    </source>
</evidence>
<protein>
    <recommendedName>
        <fullName evidence="1">Adenylosuccinate synthetase</fullName>
        <shortName evidence="1">AMPSase</shortName>
        <shortName evidence="1">AdSS</shortName>
        <ecNumber evidence="1">6.3.4.4</ecNumber>
    </recommendedName>
    <alternativeName>
        <fullName evidence="1">IMP--aspartate ligase</fullName>
    </alternativeName>
</protein>
<proteinExistence type="inferred from homology"/>
<gene>
    <name evidence="1" type="primary">purA</name>
    <name type="ordered locus">SPO1318</name>
</gene>
<organism>
    <name type="scientific">Ruegeria pomeroyi (strain ATCC 700808 / DSM 15171 / DSS-3)</name>
    <name type="common">Silicibacter pomeroyi</name>
    <dbReference type="NCBI Taxonomy" id="246200"/>
    <lineage>
        <taxon>Bacteria</taxon>
        <taxon>Pseudomonadati</taxon>
        <taxon>Pseudomonadota</taxon>
        <taxon>Alphaproteobacteria</taxon>
        <taxon>Rhodobacterales</taxon>
        <taxon>Roseobacteraceae</taxon>
        <taxon>Ruegeria</taxon>
    </lineage>
</organism>
<accession>Q5LTU4</accession>
<name>PURA_RUEPO</name>
<comment type="function">
    <text evidence="1">Plays an important role in the de novo pathway of purine nucleotide biosynthesis. Catalyzes the first committed step in the biosynthesis of AMP from IMP.</text>
</comment>
<comment type="catalytic activity">
    <reaction evidence="1">
        <text>IMP + L-aspartate + GTP = N(6)-(1,2-dicarboxyethyl)-AMP + GDP + phosphate + 2 H(+)</text>
        <dbReference type="Rhea" id="RHEA:15753"/>
        <dbReference type="ChEBI" id="CHEBI:15378"/>
        <dbReference type="ChEBI" id="CHEBI:29991"/>
        <dbReference type="ChEBI" id="CHEBI:37565"/>
        <dbReference type="ChEBI" id="CHEBI:43474"/>
        <dbReference type="ChEBI" id="CHEBI:57567"/>
        <dbReference type="ChEBI" id="CHEBI:58053"/>
        <dbReference type="ChEBI" id="CHEBI:58189"/>
        <dbReference type="EC" id="6.3.4.4"/>
    </reaction>
</comment>
<comment type="cofactor">
    <cofactor evidence="1">
        <name>Mg(2+)</name>
        <dbReference type="ChEBI" id="CHEBI:18420"/>
    </cofactor>
    <text evidence="1">Binds 1 Mg(2+) ion per subunit.</text>
</comment>
<comment type="pathway">
    <text evidence="1">Purine metabolism; AMP biosynthesis via de novo pathway; AMP from IMP: step 1/2.</text>
</comment>
<comment type="subunit">
    <text evidence="1">Homodimer.</text>
</comment>
<comment type="subcellular location">
    <subcellularLocation>
        <location evidence="1">Cytoplasm</location>
    </subcellularLocation>
</comment>
<comment type="similarity">
    <text evidence="1">Belongs to the adenylosuccinate synthetase family.</text>
</comment>